<gene>
    <name evidence="1" type="primary">rpsN</name>
    <name type="ordered locus">PLES_06781</name>
</gene>
<name>RS14_PSEA8</name>
<feature type="chain" id="PRO_1000128511" description="Small ribosomal subunit protein uS14">
    <location>
        <begin position="1"/>
        <end position="101"/>
    </location>
</feature>
<dbReference type="EMBL" id="FM209186">
    <property type="protein sequence ID" value="CAW25405.1"/>
    <property type="molecule type" value="Genomic_DNA"/>
</dbReference>
<dbReference type="RefSeq" id="WP_003093701.1">
    <property type="nucleotide sequence ID" value="NC_011770.1"/>
</dbReference>
<dbReference type="SMR" id="B7V657"/>
<dbReference type="GeneID" id="77219211"/>
<dbReference type="KEGG" id="pag:PLES_06781"/>
<dbReference type="HOGENOM" id="CLU_139869_0_1_6"/>
<dbReference type="GO" id="GO:0005737">
    <property type="term" value="C:cytoplasm"/>
    <property type="evidence" value="ECO:0007669"/>
    <property type="project" value="UniProtKB-ARBA"/>
</dbReference>
<dbReference type="GO" id="GO:0015935">
    <property type="term" value="C:small ribosomal subunit"/>
    <property type="evidence" value="ECO:0007669"/>
    <property type="project" value="TreeGrafter"/>
</dbReference>
<dbReference type="GO" id="GO:0019843">
    <property type="term" value="F:rRNA binding"/>
    <property type="evidence" value="ECO:0007669"/>
    <property type="project" value="UniProtKB-UniRule"/>
</dbReference>
<dbReference type="GO" id="GO:0003735">
    <property type="term" value="F:structural constituent of ribosome"/>
    <property type="evidence" value="ECO:0007669"/>
    <property type="project" value="InterPro"/>
</dbReference>
<dbReference type="GO" id="GO:0006412">
    <property type="term" value="P:translation"/>
    <property type="evidence" value="ECO:0007669"/>
    <property type="project" value="UniProtKB-UniRule"/>
</dbReference>
<dbReference type="FunFam" id="1.10.287.1480:FF:000001">
    <property type="entry name" value="30S ribosomal protein S14"/>
    <property type="match status" value="1"/>
</dbReference>
<dbReference type="Gene3D" id="1.10.287.1480">
    <property type="match status" value="1"/>
</dbReference>
<dbReference type="HAMAP" id="MF_00537">
    <property type="entry name" value="Ribosomal_uS14_1"/>
    <property type="match status" value="1"/>
</dbReference>
<dbReference type="InterPro" id="IPR001209">
    <property type="entry name" value="Ribosomal_uS14"/>
</dbReference>
<dbReference type="InterPro" id="IPR023036">
    <property type="entry name" value="Ribosomal_uS14_bac/plastid"/>
</dbReference>
<dbReference type="InterPro" id="IPR018271">
    <property type="entry name" value="Ribosomal_uS14_CS"/>
</dbReference>
<dbReference type="NCBIfam" id="NF006477">
    <property type="entry name" value="PRK08881.1"/>
    <property type="match status" value="1"/>
</dbReference>
<dbReference type="PANTHER" id="PTHR19836">
    <property type="entry name" value="30S RIBOSOMAL PROTEIN S14"/>
    <property type="match status" value="1"/>
</dbReference>
<dbReference type="PANTHER" id="PTHR19836:SF19">
    <property type="entry name" value="SMALL RIBOSOMAL SUBUNIT PROTEIN US14M"/>
    <property type="match status" value="1"/>
</dbReference>
<dbReference type="Pfam" id="PF00253">
    <property type="entry name" value="Ribosomal_S14"/>
    <property type="match status" value="1"/>
</dbReference>
<dbReference type="SUPFAM" id="SSF57716">
    <property type="entry name" value="Glucocorticoid receptor-like (DNA-binding domain)"/>
    <property type="match status" value="1"/>
</dbReference>
<dbReference type="PROSITE" id="PS00527">
    <property type="entry name" value="RIBOSOMAL_S14"/>
    <property type="match status" value="1"/>
</dbReference>
<accession>B7V657</accession>
<protein>
    <recommendedName>
        <fullName evidence="1">Small ribosomal subunit protein uS14</fullName>
    </recommendedName>
    <alternativeName>
        <fullName evidence="2">30S ribosomal protein S14</fullName>
    </alternativeName>
</protein>
<proteinExistence type="inferred from homology"/>
<comment type="function">
    <text evidence="1">Binds 16S rRNA, required for the assembly of 30S particles and may also be responsible for determining the conformation of the 16S rRNA at the A site.</text>
</comment>
<comment type="subunit">
    <text evidence="1">Part of the 30S ribosomal subunit. Contacts proteins S3 and S10.</text>
</comment>
<comment type="similarity">
    <text evidence="1">Belongs to the universal ribosomal protein uS14 family.</text>
</comment>
<keyword id="KW-0687">Ribonucleoprotein</keyword>
<keyword id="KW-0689">Ribosomal protein</keyword>
<keyword id="KW-0694">RNA-binding</keyword>
<keyword id="KW-0699">rRNA-binding</keyword>
<organism>
    <name type="scientific">Pseudomonas aeruginosa (strain LESB58)</name>
    <dbReference type="NCBI Taxonomy" id="557722"/>
    <lineage>
        <taxon>Bacteria</taxon>
        <taxon>Pseudomonadati</taxon>
        <taxon>Pseudomonadota</taxon>
        <taxon>Gammaproteobacteria</taxon>
        <taxon>Pseudomonadales</taxon>
        <taxon>Pseudomonadaceae</taxon>
        <taxon>Pseudomonas</taxon>
    </lineage>
</organism>
<sequence>MAKESMKNRELKRQLTVAKYAKKRAELKAIIANPNSSAEERWNAQVALQKQPRDASASRLRNRCRLTGRPHGFYRKFGLSRNKLREAAMRGDVPGLVKASW</sequence>
<evidence type="ECO:0000255" key="1">
    <source>
        <dbReference type="HAMAP-Rule" id="MF_00537"/>
    </source>
</evidence>
<evidence type="ECO:0000305" key="2"/>
<reference key="1">
    <citation type="journal article" date="2009" name="Genome Res.">
        <title>Newly introduced genomic prophage islands are critical determinants of in vivo competitiveness in the Liverpool epidemic strain of Pseudomonas aeruginosa.</title>
        <authorList>
            <person name="Winstanley C."/>
            <person name="Langille M.G.I."/>
            <person name="Fothergill J.L."/>
            <person name="Kukavica-Ibrulj I."/>
            <person name="Paradis-Bleau C."/>
            <person name="Sanschagrin F."/>
            <person name="Thomson N.R."/>
            <person name="Winsor G.L."/>
            <person name="Quail M.A."/>
            <person name="Lennard N."/>
            <person name="Bignell A."/>
            <person name="Clarke L."/>
            <person name="Seeger K."/>
            <person name="Saunders D."/>
            <person name="Harris D."/>
            <person name="Parkhill J."/>
            <person name="Hancock R.E.W."/>
            <person name="Brinkman F.S.L."/>
            <person name="Levesque R.C."/>
        </authorList>
    </citation>
    <scope>NUCLEOTIDE SEQUENCE [LARGE SCALE GENOMIC DNA]</scope>
    <source>
        <strain>LESB58</strain>
    </source>
</reference>